<feature type="chain" id="PRO_0000358964" description="Acetyl-coenzyme A carboxylase carboxyl transferase subunit beta">
    <location>
        <begin position="1"/>
        <end position="304"/>
    </location>
</feature>
<feature type="domain" description="CoA carboxyltransferase N-terminal" evidence="2">
    <location>
        <begin position="23"/>
        <end position="292"/>
    </location>
</feature>
<feature type="zinc finger region" description="C4-type" evidence="1">
    <location>
        <begin position="27"/>
        <end position="49"/>
    </location>
</feature>
<feature type="region of interest" description="Disordered" evidence="3">
    <location>
        <begin position="281"/>
        <end position="304"/>
    </location>
</feature>
<feature type="compositionally biased region" description="Pro residues" evidence="3">
    <location>
        <begin position="295"/>
        <end position="304"/>
    </location>
</feature>
<feature type="binding site" evidence="1">
    <location>
        <position position="27"/>
    </location>
    <ligand>
        <name>Zn(2+)</name>
        <dbReference type="ChEBI" id="CHEBI:29105"/>
    </ligand>
</feature>
<feature type="binding site" evidence="1">
    <location>
        <position position="30"/>
    </location>
    <ligand>
        <name>Zn(2+)</name>
        <dbReference type="ChEBI" id="CHEBI:29105"/>
    </ligand>
</feature>
<feature type="binding site" evidence="1">
    <location>
        <position position="46"/>
    </location>
    <ligand>
        <name>Zn(2+)</name>
        <dbReference type="ChEBI" id="CHEBI:29105"/>
    </ligand>
</feature>
<feature type="binding site" evidence="1">
    <location>
        <position position="49"/>
    </location>
    <ligand>
        <name>Zn(2+)</name>
        <dbReference type="ChEBI" id="CHEBI:29105"/>
    </ligand>
</feature>
<proteinExistence type="inferred from homology"/>
<protein>
    <recommendedName>
        <fullName evidence="1">Acetyl-coenzyme A carboxylase carboxyl transferase subunit beta</fullName>
        <shortName evidence="1">ACCase subunit beta</shortName>
        <shortName evidence="1">Acetyl-CoA carboxylase carboxyltransferase subunit beta</shortName>
        <ecNumber evidence="1">2.1.3.15</ecNumber>
    </recommendedName>
</protein>
<name>ACCD_CITK8</name>
<organism>
    <name type="scientific">Citrobacter koseri (strain ATCC BAA-895 / CDC 4225-83 / SGSC4696)</name>
    <dbReference type="NCBI Taxonomy" id="290338"/>
    <lineage>
        <taxon>Bacteria</taxon>
        <taxon>Pseudomonadati</taxon>
        <taxon>Pseudomonadota</taxon>
        <taxon>Gammaproteobacteria</taxon>
        <taxon>Enterobacterales</taxon>
        <taxon>Enterobacteriaceae</taxon>
        <taxon>Citrobacter</taxon>
    </lineage>
</organism>
<gene>
    <name evidence="1" type="primary">accD</name>
    <name type="ordered locus">CKO_00470</name>
</gene>
<reference key="1">
    <citation type="submission" date="2007-08" db="EMBL/GenBank/DDBJ databases">
        <authorList>
            <consortium name="The Citrobacter koseri Genome Sequencing Project"/>
            <person name="McClelland M."/>
            <person name="Sanderson E.K."/>
            <person name="Porwollik S."/>
            <person name="Spieth J."/>
            <person name="Clifton W.S."/>
            <person name="Latreille P."/>
            <person name="Courtney L."/>
            <person name="Wang C."/>
            <person name="Pepin K."/>
            <person name="Bhonagiri V."/>
            <person name="Nash W."/>
            <person name="Johnson M."/>
            <person name="Thiruvilangam P."/>
            <person name="Wilson R."/>
        </authorList>
    </citation>
    <scope>NUCLEOTIDE SEQUENCE [LARGE SCALE GENOMIC DNA]</scope>
    <source>
        <strain>ATCC BAA-895 / CDC 4225-83 / SGSC4696</strain>
    </source>
</reference>
<keyword id="KW-0067">ATP-binding</keyword>
<keyword id="KW-0963">Cytoplasm</keyword>
<keyword id="KW-0275">Fatty acid biosynthesis</keyword>
<keyword id="KW-0276">Fatty acid metabolism</keyword>
<keyword id="KW-0444">Lipid biosynthesis</keyword>
<keyword id="KW-0443">Lipid metabolism</keyword>
<keyword id="KW-0479">Metal-binding</keyword>
<keyword id="KW-0547">Nucleotide-binding</keyword>
<keyword id="KW-1185">Reference proteome</keyword>
<keyword id="KW-0808">Transferase</keyword>
<keyword id="KW-0862">Zinc</keyword>
<keyword id="KW-0863">Zinc-finger</keyword>
<accession>A8ADR3</accession>
<evidence type="ECO:0000255" key="1">
    <source>
        <dbReference type="HAMAP-Rule" id="MF_01395"/>
    </source>
</evidence>
<evidence type="ECO:0000255" key="2">
    <source>
        <dbReference type="PROSITE-ProRule" id="PRU01136"/>
    </source>
</evidence>
<evidence type="ECO:0000256" key="3">
    <source>
        <dbReference type="SAM" id="MobiDB-lite"/>
    </source>
</evidence>
<sequence>MSWIERIKSNITPTRKASIPEGVWTKCDSCGQVLYRAELERNLEVCPKCDHHMRMSARNRLHSLLDEGSLVELGSELEPKDVLKFRDSKKYKDRLASAQKETGEKDALVVMKGTLHDMPIVAAAFEFSFMGGSMGSVVGARFVRAVEQALEDNCPLICFSASGGARMQEALMSLMQMAKTSAALAKMQERGLPYISVLTDPTMGGVSASFAMLGDLNIAEPKALIGFAGPRVIEQTVREKLPPGFQRSEFLIEKGAIDMIVRRPEMRLKLASVLAKLMNLPAPNPDAPREGEVVPPVPDQEPEA</sequence>
<comment type="function">
    <text evidence="1">Component of the acetyl coenzyme A carboxylase (ACC) complex. Biotin carboxylase (BC) catalyzes the carboxylation of biotin on its carrier protein (BCCP) and then the CO(2) group is transferred by the transcarboxylase to acetyl-CoA to form malonyl-CoA.</text>
</comment>
<comment type="catalytic activity">
    <reaction evidence="1">
        <text>N(6)-carboxybiotinyl-L-lysyl-[protein] + acetyl-CoA = N(6)-biotinyl-L-lysyl-[protein] + malonyl-CoA</text>
        <dbReference type="Rhea" id="RHEA:54728"/>
        <dbReference type="Rhea" id="RHEA-COMP:10505"/>
        <dbReference type="Rhea" id="RHEA-COMP:10506"/>
        <dbReference type="ChEBI" id="CHEBI:57288"/>
        <dbReference type="ChEBI" id="CHEBI:57384"/>
        <dbReference type="ChEBI" id="CHEBI:83144"/>
        <dbReference type="ChEBI" id="CHEBI:83145"/>
        <dbReference type="EC" id="2.1.3.15"/>
    </reaction>
</comment>
<comment type="cofactor">
    <cofactor evidence="1">
        <name>Zn(2+)</name>
        <dbReference type="ChEBI" id="CHEBI:29105"/>
    </cofactor>
    <text evidence="1">Binds 1 zinc ion per subunit.</text>
</comment>
<comment type="pathway">
    <text evidence="1">Lipid metabolism; malonyl-CoA biosynthesis; malonyl-CoA from acetyl-CoA: step 1/1.</text>
</comment>
<comment type="subunit">
    <text evidence="1">Acetyl-CoA carboxylase is a heterohexamer composed of biotin carboxyl carrier protein (AccB), biotin carboxylase (AccC) and two subunits each of ACCase subunit alpha (AccA) and ACCase subunit beta (AccD).</text>
</comment>
<comment type="subcellular location">
    <subcellularLocation>
        <location evidence="1">Cytoplasm</location>
    </subcellularLocation>
</comment>
<comment type="similarity">
    <text evidence="1">Belongs to the AccD/PCCB family.</text>
</comment>
<dbReference type="EC" id="2.1.3.15" evidence="1"/>
<dbReference type="EMBL" id="CP000822">
    <property type="protein sequence ID" value="ABV11626.1"/>
    <property type="molecule type" value="Genomic_DNA"/>
</dbReference>
<dbReference type="RefSeq" id="WP_012131453.1">
    <property type="nucleotide sequence ID" value="NC_009792.1"/>
</dbReference>
<dbReference type="SMR" id="A8ADR3"/>
<dbReference type="STRING" id="290338.CKO_00470"/>
<dbReference type="GeneID" id="45134717"/>
<dbReference type="KEGG" id="cko:CKO_00470"/>
<dbReference type="HOGENOM" id="CLU_015486_1_0_6"/>
<dbReference type="OrthoDB" id="9772975at2"/>
<dbReference type="UniPathway" id="UPA00655">
    <property type="reaction ID" value="UER00711"/>
</dbReference>
<dbReference type="Proteomes" id="UP000008148">
    <property type="component" value="Chromosome"/>
</dbReference>
<dbReference type="GO" id="GO:0009329">
    <property type="term" value="C:acetate CoA-transferase complex"/>
    <property type="evidence" value="ECO:0007669"/>
    <property type="project" value="TreeGrafter"/>
</dbReference>
<dbReference type="GO" id="GO:0003989">
    <property type="term" value="F:acetyl-CoA carboxylase activity"/>
    <property type="evidence" value="ECO:0007669"/>
    <property type="project" value="InterPro"/>
</dbReference>
<dbReference type="GO" id="GO:0005524">
    <property type="term" value="F:ATP binding"/>
    <property type="evidence" value="ECO:0007669"/>
    <property type="project" value="UniProtKB-KW"/>
</dbReference>
<dbReference type="GO" id="GO:0016743">
    <property type="term" value="F:carboxyl- or carbamoyltransferase activity"/>
    <property type="evidence" value="ECO:0007669"/>
    <property type="project" value="UniProtKB-UniRule"/>
</dbReference>
<dbReference type="GO" id="GO:0008270">
    <property type="term" value="F:zinc ion binding"/>
    <property type="evidence" value="ECO:0007669"/>
    <property type="project" value="UniProtKB-UniRule"/>
</dbReference>
<dbReference type="GO" id="GO:0006633">
    <property type="term" value="P:fatty acid biosynthetic process"/>
    <property type="evidence" value="ECO:0007669"/>
    <property type="project" value="UniProtKB-KW"/>
</dbReference>
<dbReference type="GO" id="GO:2001295">
    <property type="term" value="P:malonyl-CoA biosynthetic process"/>
    <property type="evidence" value="ECO:0007669"/>
    <property type="project" value="UniProtKB-UniRule"/>
</dbReference>
<dbReference type="FunFam" id="3.90.226.10:FF:000013">
    <property type="entry name" value="Acetyl-coenzyme A carboxylase carboxyl transferase subunit beta"/>
    <property type="match status" value="1"/>
</dbReference>
<dbReference type="Gene3D" id="3.90.226.10">
    <property type="entry name" value="2-enoyl-CoA Hydratase, Chain A, domain 1"/>
    <property type="match status" value="1"/>
</dbReference>
<dbReference type="HAMAP" id="MF_01395">
    <property type="entry name" value="AcetylCoA_CT_beta"/>
    <property type="match status" value="1"/>
</dbReference>
<dbReference type="InterPro" id="IPR034733">
    <property type="entry name" value="AcCoA_carboxyl_beta"/>
</dbReference>
<dbReference type="InterPro" id="IPR000438">
    <property type="entry name" value="Acetyl_CoA_COase_Trfase_b_su"/>
</dbReference>
<dbReference type="InterPro" id="IPR029045">
    <property type="entry name" value="ClpP/crotonase-like_dom_sf"/>
</dbReference>
<dbReference type="InterPro" id="IPR011762">
    <property type="entry name" value="COA_CT_N"/>
</dbReference>
<dbReference type="InterPro" id="IPR041010">
    <property type="entry name" value="Znf-ACC"/>
</dbReference>
<dbReference type="NCBIfam" id="TIGR00515">
    <property type="entry name" value="accD"/>
    <property type="match status" value="1"/>
</dbReference>
<dbReference type="PANTHER" id="PTHR42995">
    <property type="entry name" value="ACETYL-COENZYME A CARBOXYLASE CARBOXYL TRANSFERASE SUBUNIT BETA, CHLOROPLASTIC"/>
    <property type="match status" value="1"/>
</dbReference>
<dbReference type="PANTHER" id="PTHR42995:SF5">
    <property type="entry name" value="ACETYL-COENZYME A CARBOXYLASE CARBOXYL TRANSFERASE SUBUNIT BETA, CHLOROPLASTIC"/>
    <property type="match status" value="1"/>
</dbReference>
<dbReference type="Pfam" id="PF01039">
    <property type="entry name" value="Carboxyl_trans"/>
    <property type="match status" value="1"/>
</dbReference>
<dbReference type="Pfam" id="PF17848">
    <property type="entry name" value="Zn_ribbon_ACC"/>
    <property type="match status" value="1"/>
</dbReference>
<dbReference type="PRINTS" id="PR01070">
    <property type="entry name" value="ACCCTRFRASEB"/>
</dbReference>
<dbReference type="SUPFAM" id="SSF52096">
    <property type="entry name" value="ClpP/crotonase"/>
    <property type="match status" value="1"/>
</dbReference>
<dbReference type="PROSITE" id="PS50980">
    <property type="entry name" value="COA_CT_NTER"/>
    <property type="match status" value="1"/>
</dbReference>